<evidence type="ECO:0000255" key="1">
    <source>
        <dbReference type="HAMAP-Rule" id="MF_00303"/>
    </source>
</evidence>
<proteinExistence type="inferred from homology"/>
<name>TIG_NITV9</name>
<protein>
    <recommendedName>
        <fullName evidence="1">Trigger factor</fullName>
        <shortName evidence="1">TF</shortName>
        <ecNumber evidence="1">5.2.1.8</ecNumber>
    </recommendedName>
    <alternativeName>
        <fullName evidence="1">PPIase</fullName>
    </alternativeName>
</protein>
<dbReference type="EC" id="5.2.1.8" evidence="1"/>
<dbReference type="EMBL" id="CP001197">
    <property type="protein sequence ID" value="ACL07070.1"/>
    <property type="molecule type" value="Genomic_DNA"/>
</dbReference>
<dbReference type="SMR" id="B8DNL3"/>
<dbReference type="STRING" id="883.DvMF_0109"/>
<dbReference type="KEGG" id="dvm:DvMF_0109"/>
<dbReference type="eggNOG" id="COG0544">
    <property type="taxonomic scope" value="Bacteria"/>
</dbReference>
<dbReference type="HOGENOM" id="CLU_033058_3_1_7"/>
<dbReference type="OrthoDB" id="9767721at2"/>
<dbReference type="GO" id="GO:0005737">
    <property type="term" value="C:cytoplasm"/>
    <property type="evidence" value="ECO:0007669"/>
    <property type="project" value="UniProtKB-SubCell"/>
</dbReference>
<dbReference type="GO" id="GO:0003755">
    <property type="term" value="F:peptidyl-prolyl cis-trans isomerase activity"/>
    <property type="evidence" value="ECO:0007669"/>
    <property type="project" value="UniProtKB-UniRule"/>
</dbReference>
<dbReference type="GO" id="GO:0044183">
    <property type="term" value="F:protein folding chaperone"/>
    <property type="evidence" value="ECO:0007669"/>
    <property type="project" value="TreeGrafter"/>
</dbReference>
<dbReference type="GO" id="GO:0043022">
    <property type="term" value="F:ribosome binding"/>
    <property type="evidence" value="ECO:0007669"/>
    <property type="project" value="TreeGrafter"/>
</dbReference>
<dbReference type="GO" id="GO:0051083">
    <property type="term" value="P:'de novo' cotranslational protein folding"/>
    <property type="evidence" value="ECO:0007669"/>
    <property type="project" value="TreeGrafter"/>
</dbReference>
<dbReference type="GO" id="GO:0051301">
    <property type="term" value="P:cell division"/>
    <property type="evidence" value="ECO:0007669"/>
    <property type="project" value="UniProtKB-KW"/>
</dbReference>
<dbReference type="GO" id="GO:0061077">
    <property type="term" value="P:chaperone-mediated protein folding"/>
    <property type="evidence" value="ECO:0007669"/>
    <property type="project" value="TreeGrafter"/>
</dbReference>
<dbReference type="GO" id="GO:0015031">
    <property type="term" value="P:protein transport"/>
    <property type="evidence" value="ECO:0007669"/>
    <property type="project" value="UniProtKB-UniRule"/>
</dbReference>
<dbReference type="GO" id="GO:0043335">
    <property type="term" value="P:protein unfolding"/>
    <property type="evidence" value="ECO:0007669"/>
    <property type="project" value="TreeGrafter"/>
</dbReference>
<dbReference type="Gene3D" id="3.10.50.40">
    <property type="match status" value="1"/>
</dbReference>
<dbReference type="Gene3D" id="3.30.70.1050">
    <property type="entry name" value="Trigger factor ribosome-binding domain"/>
    <property type="match status" value="1"/>
</dbReference>
<dbReference type="Gene3D" id="1.10.3120.10">
    <property type="entry name" value="Trigger factor, C-terminal domain"/>
    <property type="match status" value="1"/>
</dbReference>
<dbReference type="HAMAP" id="MF_00303">
    <property type="entry name" value="Trigger_factor_Tig"/>
    <property type="match status" value="1"/>
</dbReference>
<dbReference type="InterPro" id="IPR046357">
    <property type="entry name" value="PPIase_dom_sf"/>
</dbReference>
<dbReference type="InterPro" id="IPR005215">
    <property type="entry name" value="Trig_fac"/>
</dbReference>
<dbReference type="InterPro" id="IPR008880">
    <property type="entry name" value="Trigger_fac_C"/>
</dbReference>
<dbReference type="InterPro" id="IPR037041">
    <property type="entry name" value="Trigger_fac_C_sf"/>
</dbReference>
<dbReference type="InterPro" id="IPR008881">
    <property type="entry name" value="Trigger_fac_ribosome-bd_bac"/>
</dbReference>
<dbReference type="InterPro" id="IPR036611">
    <property type="entry name" value="Trigger_fac_ribosome-bd_sf"/>
</dbReference>
<dbReference type="InterPro" id="IPR027304">
    <property type="entry name" value="Trigger_fact/SurA_dom_sf"/>
</dbReference>
<dbReference type="NCBIfam" id="TIGR00115">
    <property type="entry name" value="tig"/>
    <property type="match status" value="1"/>
</dbReference>
<dbReference type="PANTHER" id="PTHR30560">
    <property type="entry name" value="TRIGGER FACTOR CHAPERONE AND PEPTIDYL-PROLYL CIS/TRANS ISOMERASE"/>
    <property type="match status" value="1"/>
</dbReference>
<dbReference type="PANTHER" id="PTHR30560:SF3">
    <property type="entry name" value="TRIGGER FACTOR-LIKE PROTEIN TIG, CHLOROPLASTIC"/>
    <property type="match status" value="1"/>
</dbReference>
<dbReference type="Pfam" id="PF05698">
    <property type="entry name" value="Trigger_C"/>
    <property type="match status" value="1"/>
</dbReference>
<dbReference type="Pfam" id="PF05697">
    <property type="entry name" value="Trigger_N"/>
    <property type="match status" value="1"/>
</dbReference>
<dbReference type="PIRSF" id="PIRSF003095">
    <property type="entry name" value="Trigger_factor"/>
    <property type="match status" value="1"/>
</dbReference>
<dbReference type="SUPFAM" id="SSF54534">
    <property type="entry name" value="FKBP-like"/>
    <property type="match status" value="1"/>
</dbReference>
<dbReference type="SUPFAM" id="SSF109998">
    <property type="entry name" value="Triger factor/SurA peptide-binding domain-like"/>
    <property type="match status" value="1"/>
</dbReference>
<dbReference type="SUPFAM" id="SSF102735">
    <property type="entry name" value="Trigger factor ribosome-binding domain"/>
    <property type="match status" value="1"/>
</dbReference>
<feature type="chain" id="PRO_1000119514" description="Trigger factor">
    <location>
        <begin position="1"/>
        <end position="432"/>
    </location>
</feature>
<feature type="domain" description="PPIase FKBP-type" evidence="1">
    <location>
        <begin position="163"/>
        <end position="248"/>
    </location>
</feature>
<keyword id="KW-0131">Cell cycle</keyword>
<keyword id="KW-0132">Cell division</keyword>
<keyword id="KW-0143">Chaperone</keyword>
<keyword id="KW-0963">Cytoplasm</keyword>
<keyword id="KW-0413">Isomerase</keyword>
<keyword id="KW-0697">Rotamase</keyword>
<reference key="1">
    <citation type="submission" date="2008-10" db="EMBL/GenBank/DDBJ databases">
        <title>Complete sequence of Desulfovibrio vulgaris str. 'Miyazaki F'.</title>
        <authorList>
            <person name="Lucas S."/>
            <person name="Copeland A."/>
            <person name="Lapidus A."/>
            <person name="Glavina del Rio T."/>
            <person name="Dalin E."/>
            <person name="Tice H."/>
            <person name="Bruce D."/>
            <person name="Goodwin L."/>
            <person name="Pitluck S."/>
            <person name="Sims D."/>
            <person name="Brettin T."/>
            <person name="Detter J.C."/>
            <person name="Han C."/>
            <person name="Larimer F."/>
            <person name="Land M."/>
            <person name="Hauser L."/>
            <person name="Kyrpides N."/>
            <person name="Mikhailova N."/>
            <person name="Hazen T.C."/>
            <person name="Richardson P."/>
        </authorList>
    </citation>
    <scope>NUCLEOTIDE SEQUENCE [LARGE SCALE GENOMIC DNA]</scope>
    <source>
        <strain>DSM 19637 / Miyazaki F</strain>
    </source>
</reference>
<gene>
    <name evidence="1" type="primary">tig</name>
    <name type="ordered locus">DvMF_0109</name>
</gene>
<comment type="function">
    <text evidence="1">Involved in protein export. Acts as a chaperone by maintaining the newly synthesized protein in an open conformation. Functions as a peptidyl-prolyl cis-trans isomerase.</text>
</comment>
<comment type="catalytic activity">
    <reaction evidence="1">
        <text>[protein]-peptidylproline (omega=180) = [protein]-peptidylproline (omega=0)</text>
        <dbReference type="Rhea" id="RHEA:16237"/>
        <dbReference type="Rhea" id="RHEA-COMP:10747"/>
        <dbReference type="Rhea" id="RHEA-COMP:10748"/>
        <dbReference type="ChEBI" id="CHEBI:83833"/>
        <dbReference type="ChEBI" id="CHEBI:83834"/>
        <dbReference type="EC" id="5.2.1.8"/>
    </reaction>
</comment>
<comment type="subcellular location">
    <subcellularLocation>
        <location>Cytoplasm</location>
    </subcellularLocation>
    <text evidence="1">About half TF is bound to the ribosome near the polypeptide exit tunnel while the other half is free in the cytoplasm.</text>
</comment>
<comment type="domain">
    <text evidence="1">Consists of 3 domains; the N-terminus binds the ribosome, the middle domain has PPIase activity, while the C-terminus has intrinsic chaperone activity on its own.</text>
</comment>
<comment type="similarity">
    <text evidence="1">Belongs to the FKBP-type PPIase family. Tig subfamily.</text>
</comment>
<accession>B8DNL3</accession>
<organism>
    <name type="scientific">Nitratidesulfovibrio vulgaris (strain DSM 19637 / Miyazaki F)</name>
    <name type="common">Desulfovibrio vulgaris</name>
    <dbReference type="NCBI Taxonomy" id="883"/>
    <lineage>
        <taxon>Bacteria</taxon>
        <taxon>Pseudomonadati</taxon>
        <taxon>Thermodesulfobacteriota</taxon>
        <taxon>Desulfovibrionia</taxon>
        <taxon>Desulfovibrionales</taxon>
        <taxon>Desulfovibrionaceae</taxon>
        <taxon>Nitratidesulfovibrio</taxon>
    </lineage>
</organism>
<sequence>MEYTVEDLSPVKKKVNISVPVEEVEAALSAAIAMYRTNMSLDGFRKGKVPSNLVESRFRKEIYGEATQDLVNVHINEVMTALDANPISRIDFDGGQLERGTPFEYSISFEVLPEFDLPDYDGFAVEQEKAVVDMKEVDEVITRIRTNMAELVPVAEARPGKDGDVVVLDFAAFENGEPVEGISAENFQMNLGDRQALEDFENLVKTLAPGQEGEGPLNFPADFINPDFAGKSLTVKVKVHAVKERRLPEANDELAQKAGGFESMDKMREAVTSSYMQSRTQLVKATAQKTMLDKLLKMVDFPLPESMVDMYVGHLLDDMRSKLERQGKSMESLGKKPEELRAEVRPEAEQVTRTQIFLLRAARKEGVEVNEQEIDGQIQQIAMRSGQDYNALKDYYIKNNLIFSLRDRMLADKAMDAIYEKAAVTEVEPAAK</sequence>